<gene>
    <name type="ordered locus">ACIAD1132</name>
</gene>
<organism>
    <name type="scientific">Acinetobacter baylyi (strain ATCC 33305 / BD413 / ADP1)</name>
    <dbReference type="NCBI Taxonomy" id="62977"/>
    <lineage>
        <taxon>Bacteria</taxon>
        <taxon>Pseudomonadati</taxon>
        <taxon>Pseudomonadota</taxon>
        <taxon>Gammaproteobacteria</taxon>
        <taxon>Moraxellales</taxon>
        <taxon>Moraxellaceae</taxon>
        <taxon>Acinetobacter</taxon>
    </lineage>
</organism>
<evidence type="ECO:0000255" key="1">
    <source>
        <dbReference type="HAMAP-Rule" id="MF_00048"/>
    </source>
</evidence>
<dbReference type="EMBL" id="CR543861">
    <property type="protein sequence ID" value="CAG68014.1"/>
    <property type="molecule type" value="Genomic_DNA"/>
</dbReference>
<dbReference type="RefSeq" id="WP_004921458.1">
    <property type="nucleotide sequence ID" value="NC_005966.1"/>
</dbReference>
<dbReference type="SMR" id="Q6FD45"/>
<dbReference type="STRING" id="202950.GCA_001485005_01240"/>
<dbReference type="GeneID" id="45233563"/>
<dbReference type="KEGG" id="aci:ACIAD1132"/>
<dbReference type="eggNOG" id="COG0792">
    <property type="taxonomic scope" value="Bacteria"/>
</dbReference>
<dbReference type="HOGENOM" id="CLU_115353_1_1_6"/>
<dbReference type="OrthoDB" id="9794876at2"/>
<dbReference type="BioCyc" id="ASP62977:ACIAD_RS05195-MONOMER"/>
<dbReference type="Proteomes" id="UP000000430">
    <property type="component" value="Chromosome"/>
</dbReference>
<dbReference type="GO" id="GO:0003676">
    <property type="term" value="F:nucleic acid binding"/>
    <property type="evidence" value="ECO:0007669"/>
    <property type="project" value="InterPro"/>
</dbReference>
<dbReference type="Gene3D" id="3.40.1350.10">
    <property type="match status" value="1"/>
</dbReference>
<dbReference type="HAMAP" id="MF_00048">
    <property type="entry name" value="UPF0102"/>
    <property type="match status" value="1"/>
</dbReference>
<dbReference type="InterPro" id="IPR011335">
    <property type="entry name" value="Restrct_endonuc-II-like"/>
</dbReference>
<dbReference type="InterPro" id="IPR011856">
    <property type="entry name" value="tRNA_endonuc-like_dom_sf"/>
</dbReference>
<dbReference type="InterPro" id="IPR003509">
    <property type="entry name" value="UPF0102_YraN-like"/>
</dbReference>
<dbReference type="NCBIfam" id="NF009150">
    <property type="entry name" value="PRK12497.1-3"/>
    <property type="match status" value="1"/>
</dbReference>
<dbReference type="NCBIfam" id="NF011267">
    <property type="entry name" value="PRK14674.1"/>
    <property type="match status" value="1"/>
</dbReference>
<dbReference type="NCBIfam" id="TIGR00252">
    <property type="entry name" value="YraN family protein"/>
    <property type="match status" value="1"/>
</dbReference>
<dbReference type="PANTHER" id="PTHR34039">
    <property type="entry name" value="UPF0102 PROTEIN YRAN"/>
    <property type="match status" value="1"/>
</dbReference>
<dbReference type="PANTHER" id="PTHR34039:SF1">
    <property type="entry name" value="UPF0102 PROTEIN YRAN"/>
    <property type="match status" value="1"/>
</dbReference>
<dbReference type="Pfam" id="PF02021">
    <property type="entry name" value="UPF0102"/>
    <property type="match status" value="1"/>
</dbReference>
<dbReference type="SUPFAM" id="SSF52980">
    <property type="entry name" value="Restriction endonuclease-like"/>
    <property type="match status" value="1"/>
</dbReference>
<accession>Q6FD45</accession>
<feature type="chain" id="PRO_0000336113" description="UPF0102 protein ACIAD1132">
    <location>
        <begin position="1"/>
        <end position="140"/>
    </location>
</feature>
<comment type="similarity">
    <text evidence="1">Belongs to the UPF0102 family.</text>
</comment>
<sequence>MPDMKPVQDIHAHHLGKWAENQALNILQANGFKLVIRNFHSRVGEIDLIVAKADELIFVEVKARTLGSYAAANEVLLVSQQRKIIKTAQYFLNRYPDYQQFYCRFDVICFDFPHKIAKTVQQDFSKLRYDQQWIENAFTL</sequence>
<protein>
    <recommendedName>
        <fullName evidence="1">UPF0102 protein ACIAD1132</fullName>
    </recommendedName>
</protein>
<proteinExistence type="inferred from homology"/>
<name>Y1132_ACIAD</name>
<reference key="1">
    <citation type="journal article" date="2004" name="Nucleic Acids Res.">
        <title>Unique features revealed by the genome sequence of Acinetobacter sp. ADP1, a versatile and naturally transformation competent bacterium.</title>
        <authorList>
            <person name="Barbe V."/>
            <person name="Vallenet D."/>
            <person name="Fonknechten N."/>
            <person name="Kreimeyer A."/>
            <person name="Oztas S."/>
            <person name="Labarre L."/>
            <person name="Cruveiller S."/>
            <person name="Robert C."/>
            <person name="Duprat S."/>
            <person name="Wincker P."/>
            <person name="Ornston L.N."/>
            <person name="Weissenbach J."/>
            <person name="Marliere P."/>
            <person name="Cohen G.N."/>
            <person name="Medigue C."/>
        </authorList>
    </citation>
    <scope>NUCLEOTIDE SEQUENCE [LARGE SCALE GENOMIC DNA]</scope>
    <source>
        <strain>ATCC 33305 / BD413 / ADP1</strain>
    </source>
</reference>